<evidence type="ECO:0000255" key="1">
    <source>
        <dbReference type="HAMAP-Rule" id="MF_00537"/>
    </source>
</evidence>
<evidence type="ECO:0000305" key="2"/>
<sequence length="101" mass="11809">MAKVSSVQKNLKRSRLFNKLKLKRQALKSKIYDKNLSLEERFNLVLKLSKLPRNSSSTRIRNRCAETGRPRGYYRKFKLCRNIIRELAGSGIIPGLRKSSW</sequence>
<proteinExistence type="inferred from homology"/>
<organism>
    <name type="scientific">Orientia tsutsugamushi (strain Boryong)</name>
    <name type="common">Rickettsia tsutsugamushi</name>
    <dbReference type="NCBI Taxonomy" id="357244"/>
    <lineage>
        <taxon>Bacteria</taxon>
        <taxon>Pseudomonadati</taxon>
        <taxon>Pseudomonadota</taxon>
        <taxon>Alphaproteobacteria</taxon>
        <taxon>Rickettsiales</taxon>
        <taxon>Rickettsiaceae</taxon>
        <taxon>Rickettsieae</taxon>
        <taxon>Orientia</taxon>
    </lineage>
</organism>
<protein>
    <recommendedName>
        <fullName evidence="1">Small ribosomal subunit protein uS14</fullName>
    </recommendedName>
    <alternativeName>
        <fullName evidence="2">30S ribosomal protein S14</fullName>
    </alternativeName>
</protein>
<keyword id="KW-1185">Reference proteome</keyword>
<keyword id="KW-0687">Ribonucleoprotein</keyword>
<keyword id="KW-0689">Ribosomal protein</keyword>
<keyword id="KW-0694">RNA-binding</keyword>
<keyword id="KW-0699">rRNA-binding</keyword>
<comment type="function">
    <text evidence="1">Binds 16S rRNA, required for the assembly of 30S particles and may also be responsible for determining the conformation of the 16S rRNA at the A site.</text>
</comment>
<comment type="subunit">
    <text evidence="1">Part of the 30S ribosomal subunit. Contacts proteins S3 and S10.</text>
</comment>
<comment type="similarity">
    <text evidence="1">Belongs to the universal ribosomal protein uS14 family.</text>
</comment>
<feature type="chain" id="PRO_1000128476" description="Small ribosomal subunit protein uS14">
    <location>
        <begin position="1"/>
        <end position="101"/>
    </location>
</feature>
<reference key="1">
    <citation type="journal article" date="2007" name="Proc. Natl. Acad. Sci. U.S.A.">
        <title>The Orientia tsutsugamushi genome reveals massive proliferation of conjugative type IV secretion system and host-cell interaction genes.</title>
        <authorList>
            <person name="Cho N.-H."/>
            <person name="Kim H.-R."/>
            <person name="Lee J.-H."/>
            <person name="Kim S.-Y."/>
            <person name="Kim J."/>
            <person name="Cha S."/>
            <person name="Kim S.-Y."/>
            <person name="Darby A.C."/>
            <person name="Fuxelius H.-H."/>
            <person name="Yin J."/>
            <person name="Kim J.H."/>
            <person name="Kim J."/>
            <person name="Lee S.J."/>
            <person name="Koh Y.-S."/>
            <person name="Jang W.-J."/>
            <person name="Park K.-H."/>
            <person name="Andersson S.G.E."/>
            <person name="Choi M.-S."/>
            <person name="Kim I.-S."/>
        </authorList>
    </citation>
    <scope>NUCLEOTIDE SEQUENCE [LARGE SCALE GENOMIC DNA]</scope>
    <source>
        <strain>Boryong</strain>
    </source>
</reference>
<dbReference type="EMBL" id="AM494475">
    <property type="protein sequence ID" value="CAM79429.1"/>
    <property type="molecule type" value="Genomic_DNA"/>
</dbReference>
<dbReference type="RefSeq" id="WP_011944427.1">
    <property type="nucleotide sequence ID" value="NC_009488.1"/>
</dbReference>
<dbReference type="SMR" id="A5CCJ9"/>
<dbReference type="KEGG" id="ots:OTBS_0363"/>
<dbReference type="eggNOG" id="COG0199">
    <property type="taxonomic scope" value="Bacteria"/>
</dbReference>
<dbReference type="HOGENOM" id="CLU_139869_0_1_5"/>
<dbReference type="Proteomes" id="UP000001565">
    <property type="component" value="Chromosome"/>
</dbReference>
<dbReference type="GO" id="GO:0005737">
    <property type="term" value="C:cytoplasm"/>
    <property type="evidence" value="ECO:0007669"/>
    <property type="project" value="UniProtKB-ARBA"/>
</dbReference>
<dbReference type="GO" id="GO:0015935">
    <property type="term" value="C:small ribosomal subunit"/>
    <property type="evidence" value="ECO:0007669"/>
    <property type="project" value="TreeGrafter"/>
</dbReference>
<dbReference type="GO" id="GO:0019843">
    <property type="term" value="F:rRNA binding"/>
    <property type="evidence" value="ECO:0007669"/>
    <property type="project" value="UniProtKB-UniRule"/>
</dbReference>
<dbReference type="GO" id="GO:0003735">
    <property type="term" value="F:structural constituent of ribosome"/>
    <property type="evidence" value="ECO:0007669"/>
    <property type="project" value="InterPro"/>
</dbReference>
<dbReference type="GO" id="GO:0006412">
    <property type="term" value="P:translation"/>
    <property type="evidence" value="ECO:0007669"/>
    <property type="project" value="UniProtKB-UniRule"/>
</dbReference>
<dbReference type="FunFam" id="1.10.287.1480:FF:000001">
    <property type="entry name" value="30S ribosomal protein S14"/>
    <property type="match status" value="1"/>
</dbReference>
<dbReference type="Gene3D" id="1.10.287.1480">
    <property type="match status" value="1"/>
</dbReference>
<dbReference type="HAMAP" id="MF_00537">
    <property type="entry name" value="Ribosomal_uS14_1"/>
    <property type="match status" value="1"/>
</dbReference>
<dbReference type="InterPro" id="IPR001209">
    <property type="entry name" value="Ribosomal_uS14"/>
</dbReference>
<dbReference type="InterPro" id="IPR023036">
    <property type="entry name" value="Ribosomal_uS14_bac/plastid"/>
</dbReference>
<dbReference type="InterPro" id="IPR018271">
    <property type="entry name" value="Ribosomal_uS14_CS"/>
</dbReference>
<dbReference type="NCBIfam" id="NF006477">
    <property type="entry name" value="PRK08881.1"/>
    <property type="match status" value="1"/>
</dbReference>
<dbReference type="PANTHER" id="PTHR19836">
    <property type="entry name" value="30S RIBOSOMAL PROTEIN S14"/>
    <property type="match status" value="1"/>
</dbReference>
<dbReference type="PANTHER" id="PTHR19836:SF19">
    <property type="entry name" value="SMALL RIBOSOMAL SUBUNIT PROTEIN US14M"/>
    <property type="match status" value="1"/>
</dbReference>
<dbReference type="Pfam" id="PF00253">
    <property type="entry name" value="Ribosomal_S14"/>
    <property type="match status" value="1"/>
</dbReference>
<dbReference type="SUPFAM" id="SSF57716">
    <property type="entry name" value="Glucocorticoid receptor-like (DNA-binding domain)"/>
    <property type="match status" value="1"/>
</dbReference>
<dbReference type="PROSITE" id="PS00527">
    <property type="entry name" value="RIBOSOMAL_S14"/>
    <property type="match status" value="1"/>
</dbReference>
<accession>A5CCJ9</accession>
<gene>
    <name evidence="1" type="primary">rpsN</name>
    <name type="ordered locus">OTBS_0363</name>
</gene>
<name>RS14_ORITB</name>